<name>ATPFD_MYCBO</name>
<protein>
    <recommendedName>
        <fullName>ATP synthase subunit b-delta</fullName>
    </recommendedName>
    <domain>
        <recommendedName>
            <fullName>ATP synthase subunit b</fullName>
        </recommendedName>
        <alternativeName>
            <fullName>ATP synthase F(0) sector subunit b 2</fullName>
        </alternativeName>
        <alternativeName>
            <fullName>ATPase subunit I 2</fullName>
        </alternativeName>
        <alternativeName>
            <fullName>F-type ATPase subunit b 2</fullName>
            <shortName>F-ATPase subunit b 2</shortName>
        </alternativeName>
    </domain>
    <domain>
        <recommendedName>
            <fullName>ATP synthase subunit delta</fullName>
        </recommendedName>
        <alternativeName>
            <fullName>ATP synthase F(1) sector subunit delta</fullName>
        </alternativeName>
        <alternativeName>
            <fullName>F-type ATPase subunit delta</fullName>
            <shortName>F-ATPase subunit delta</shortName>
        </alternativeName>
    </domain>
</protein>
<sequence>MSTFIGQLFGFAVIVYLVWRFIVPLVGRLMSARQDTVRQQLADAAAAADRLAEASQAHTKALEDAKSEAHRVVEEARTDAERIAEQLEAQADVEAERIKMQGARQVDLIRAQLTRQLRLELGHESVRQARELVRNHVADQAQQSATVDRFLDQLDAMAPATADVDYPLLAKMRSASRRALTSLVDWFGTMAQDLDHQGLTTLAGELVSVARLLDREAVVTRYLTVPAEDATPRIRLIERLVSGKVGAPTLEVLRTAVSKRWSANSDLIDAIEHVSRQALLELAERAGQVDEVEDQLFRFSRILDVQPRLAILLGDCAVPAEGRVRLLRKVLERADSTVNPVVVALLSHTVELLRGQAVEEAVLFLAEVAVARRGEIVAQVGAAAELSDAQRTRLTEVLSRIYGHPVTVQLHIDAALLGGLSIAVGDEVIDGTLSSRLAAAEARLPD</sequence>
<reference key="1">
    <citation type="journal article" date="2003" name="Proc. Natl. Acad. Sci. U.S.A.">
        <title>The complete genome sequence of Mycobacterium bovis.</title>
        <authorList>
            <person name="Garnier T."/>
            <person name="Eiglmeier K."/>
            <person name="Camus J.-C."/>
            <person name="Medina N."/>
            <person name="Mansoor H."/>
            <person name="Pryor M."/>
            <person name="Duthoy S."/>
            <person name="Grondin S."/>
            <person name="Lacroix C."/>
            <person name="Monsempe C."/>
            <person name="Simon S."/>
            <person name="Harris B."/>
            <person name="Atkin R."/>
            <person name="Doggett J."/>
            <person name="Mayes R."/>
            <person name="Keating L."/>
            <person name="Wheeler P.R."/>
            <person name="Parkhill J."/>
            <person name="Barrell B.G."/>
            <person name="Cole S.T."/>
            <person name="Gordon S.V."/>
            <person name="Hewinson R.G."/>
        </authorList>
    </citation>
    <scope>NUCLEOTIDE SEQUENCE [LARGE SCALE GENOMIC DNA]</scope>
    <source>
        <strain>ATCC BAA-935 / AF2122/97</strain>
    </source>
</reference>
<reference key="2">
    <citation type="journal article" date="2017" name="Genome Announc.">
        <title>Updated reference genome sequence and annotation of Mycobacterium bovis AF2122/97.</title>
        <authorList>
            <person name="Malone K.M."/>
            <person name="Farrell D."/>
            <person name="Stuber T.P."/>
            <person name="Schubert O.T."/>
            <person name="Aebersold R."/>
            <person name="Robbe-Austerman S."/>
            <person name="Gordon S.V."/>
        </authorList>
    </citation>
    <scope>NUCLEOTIDE SEQUENCE [LARGE SCALE GENOMIC DNA]</scope>
    <scope>GENOME REANNOTATION</scope>
    <source>
        <strain>ATCC BAA-935 / AF2122/97</strain>
    </source>
</reference>
<evidence type="ECO:0000250" key="1"/>
<evidence type="ECO:0000255" key="2"/>
<evidence type="ECO:0000305" key="3"/>
<organism>
    <name type="scientific">Mycobacterium bovis (strain ATCC BAA-935 / AF2122/97)</name>
    <dbReference type="NCBI Taxonomy" id="233413"/>
    <lineage>
        <taxon>Bacteria</taxon>
        <taxon>Bacillati</taxon>
        <taxon>Actinomycetota</taxon>
        <taxon>Actinomycetes</taxon>
        <taxon>Mycobacteriales</taxon>
        <taxon>Mycobacteriaceae</taxon>
        <taxon>Mycobacterium</taxon>
        <taxon>Mycobacterium tuberculosis complex</taxon>
    </lineage>
</organism>
<comment type="function">
    <text evidence="1">F(1)F(0) ATP synthase produces ATP from ADP in the presence of a proton or sodium gradient. F-type ATPases consist of two structural domains, F(1) containing the extramembraneous catalytic core and F(0) containing the membrane proton channel, linked together by a central stalk and a peripheral stalk. During catalysis, ATP synthesis in the catalytic domain of F(1) is coupled via a rotary mechanism of the central stalk subunits to proton translocation (By similarity).</text>
</comment>
<comment type="function">
    <text evidence="1">This fusion protein includes a component of the F(0) channel (subunit b) and of the F(1) subunit (subunit delta). Two copies of subunit b and one of delta together form the peripheral 'stator' stalk which links F(1) to F(0) (By similarity).</text>
</comment>
<comment type="subunit">
    <text evidence="1">F-type ATPases have 2 components, F(1) - the catalytic core - and F(0) - the membrane proton channel. F(1) has five subunits: alpha(3), beta(3), gamma(1), delta(1), epsilon(1). F(0) has three main subunits: a(1), b(2) and c(10-14). The alpha and beta chains form an alternating ring which encloses part of the gamma chain. F(1) is attached to F(0) by a central stalk formed by the gamma and epsilon chains, while a peripheral stalk is formed by the delta and b chains (By similarity).</text>
</comment>
<comment type="subcellular location">
    <subcellularLocation>
        <location evidence="1">Cell membrane</location>
        <topology evidence="1">Single-pass membrane protein</topology>
    </subcellularLocation>
</comment>
<comment type="similarity">
    <text evidence="3">In the N-terminal section; belongs to the ATPase B chain family.</text>
</comment>
<comment type="similarity">
    <text evidence="3">In the C-terminal section; belongs to the ATPase delta chain family.</text>
</comment>
<gene>
    <name type="primary">atpFH</name>
    <name type="synonym">atpF</name>
    <name type="synonym">atpH</name>
    <name type="ordered locus">BQ2027_MB1339</name>
</gene>
<proteinExistence type="inferred from homology"/>
<keyword id="KW-0066">ATP synthesis</keyword>
<keyword id="KW-1003">Cell membrane</keyword>
<keyword id="KW-0138">CF(0)</keyword>
<keyword id="KW-0139">CF(1)</keyword>
<keyword id="KW-0375">Hydrogen ion transport</keyword>
<keyword id="KW-0406">Ion transport</keyword>
<keyword id="KW-0472">Membrane</keyword>
<keyword id="KW-0511">Multifunctional enzyme</keyword>
<keyword id="KW-1185">Reference proteome</keyword>
<keyword id="KW-0812">Transmembrane</keyword>
<keyword id="KW-1133">Transmembrane helix</keyword>
<keyword id="KW-0813">Transport</keyword>
<dbReference type="EMBL" id="LT708304">
    <property type="protein sequence ID" value="SIT99942.1"/>
    <property type="molecule type" value="Genomic_DNA"/>
</dbReference>
<dbReference type="RefSeq" id="NP_854993.1">
    <property type="nucleotide sequence ID" value="NC_002945.3"/>
</dbReference>
<dbReference type="RefSeq" id="WP_003406697.1">
    <property type="nucleotide sequence ID" value="NC_002945.4"/>
</dbReference>
<dbReference type="SMR" id="P0A501"/>
<dbReference type="KEGG" id="mbo:BQ2027_MB1339"/>
<dbReference type="PATRIC" id="fig|233413.5.peg.1468"/>
<dbReference type="Proteomes" id="UP000001419">
    <property type="component" value="Chromosome"/>
</dbReference>
<dbReference type="GO" id="GO:0005886">
    <property type="term" value="C:plasma membrane"/>
    <property type="evidence" value="ECO:0007669"/>
    <property type="project" value="UniProtKB-SubCell"/>
</dbReference>
<dbReference type="GO" id="GO:0045259">
    <property type="term" value="C:proton-transporting ATP synthase complex"/>
    <property type="evidence" value="ECO:0007669"/>
    <property type="project" value="UniProtKB-KW"/>
</dbReference>
<dbReference type="GO" id="GO:0046933">
    <property type="term" value="F:proton-transporting ATP synthase activity, rotational mechanism"/>
    <property type="evidence" value="ECO:0007669"/>
    <property type="project" value="UniProtKB-UniRule"/>
</dbReference>
<dbReference type="CDD" id="cd06503">
    <property type="entry name" value="ATP-synt_Fo_b"/>
    <property type="match status" value="1"/>
</dbReference>
<dbReference type="Gene3D" id="1.20.5.620">
    <property type="entry name" value="F1F0 ATP synthase subunit B, membrane domain"/>
    <property type="match status" value="1"/>
</dbReference>
<dbReference type="Gene3D" id="1.10.520.20">
    <property type="entry name" value="N-terminal domain of the delta subunit of the F1F0-ATP synthase"/>
    <property type="match status" value="1"/>
</dbReference>
<dbReference type="HAMAP" id="MF_01398">
    <property type="entry name" value="ATP_synth_b_bprime"/>
    <property type="match status" value="1"/>
</dbReference>
<dbReference type="HAMAP" id="MF_01416">
    <property type="entry name" value="ATP_synth_delta_bact"/>
    <property type="match status" value="1"/>
</dbReference>
<dbReference type="InterPro" id="IPR028987">
    <property type="entry name" value="ATP_synth_B-like_membr_sf"/>
</dbReference>
<dbReference type="InterPro" id="IPR002146">
    <property type="entry name" value="ATP_synth_b/b'su_bac/chlpt"/>
</dbReference>
<dbReference type="InterPro" id="IPR005864">
    <property type="entry name" value="ATP_synth_F0_bsu_bac"/>
</dbReference>
<dbReference type="InterPro" id="IPR026015">
    <property type="entry name" value="ATP_synth_OSCP/delta_N_sf"/>
</dbReference>
<dbReference type="InterPro" id="IPR000711">
    <property type="entry name" value="ATPase_OSCP/dsu"/>
</dbReference>
<dbReference type="NCBIfam" id="TIGR01144">
    <property type="entry name" value="ATP_synt_b"/>
    <property type="match status" value="1"/>
</dbReference>
<dbReference type="NCBIfam" id="TIGR01145">
    <property type="entry name" value="ATP_synt_delta"/>
    <property type="match status" value="1"/>
</dbReference>
<dbReference type="NCBIfam" id="NF009961">
    <property type="entry name" value="PRK13428.1"/>
    <property type="match status" value="1"/>
</dbReference>
<dbReference type="NCBIfam" id="NF009967">
    <property type="entry name" value="PRK13430.1"/>
    <property type="match status" value="1"/>
</dbReference>
<dbReference type="PANTHER" id="PTHR11910">
    <property type="entry name" value="ATP SYNTHASE DELTA CHAIN"/>
    <property type="match status" value="1"/>
</dbReference>
<dbReference type="Pfam" id="PF00430">
    <property type="entry name" value="ATP-synt_B"/>
    <property type="match status" value="1"/>
</dbReference>
<dbReference type="Pfam" id="PF00213">
    <property type="entry name" value="OSCP"/>
    <property type="match status" value="1"/>
</dbReference>
<dbReference type="PRINTS" id="PR00125">
    <property type="entry name" value="ATPASEDELTA"/>
</dbReference>
<dbReference type="SUPFAM" id="SSF81573">
    <property type="entry name" value="F1F0 ATP synthase subunit B, membrane domain"/>
    <property type="match status" value="1"/>
</dbReference>
<feature type="chain" id="PRO_0000193471" description="ATP synthase subunit b-delta">
    <location>
        <begin position="1"/>
        <end position="446"/>
    </location>
</feature>
<feature type="transmembrane region" description="Helical" evidence="2">
    <location>
        <begin position="4"/>
        <end position="24"/>
    </location>
</feature>
<feature type="region of interest" description="ATP synthase subunit b">
    <location>
        <begin position="1"/>
        <end position="168"/>
    </location>
</feature>
<feature type="region of interest" description="ATP synthase subunit delta">
    <location>
        <begin position="169"/>
        <end position="446"/>
    </location>
</feature>
<accession>P0A501</accession>
<accession>A0A1R3Y035</accession>
<accession>Q10594</accession>
<accession>X2BHK0</accession>